<proteinExistence type="evidence at protein level"/>
<gene>
    <name type="primary">PDCL2</name>
</gene>
<evidence type="ECO:0000250" key="1"/>
<evidence type="ECO:0000250" key="2">
    <source>
        <dbReference type="UniProtKB" id="Q78Y63"/>
    </source>
</evidence>
<evidence type="ECO:0000255" key="3"/>
<evidence type="ECO:0000269" key="4">
    <source>
    </source>
</evidence>
<evidence type="ECO:0000269" key="5">
    <source>
    </source>
</evidence>
<evidence type="ECO:0000305" key="6"/>
<evidence type="ECO:0007829" key="7">
    <source>
        <dbReference type="PDB" id="3EVI"/>
    </source>
</evidence>
<name>PDCL2_HUMAN</name>
<protein>
    <recommendedName>
        <fullName>Phosducin-like protein 2</fullName>
    </recommendedName>
</protein>
<comment type="function">
    <text evidence="2">Essential for male fertility, spermiogenesis and acrosome formation.</text>
</comment>
<comment type="subunit">
    <text evidence="2">Interacts with the CCT chaperonin complex and actin.</text>
</comment>
<comment type="subcellular location">
    <subcellularLocation>
        <location evidence="2">Endoplasmic reticulum</location>
    </subcellularLocation>
</comment>
<comment type="tissue specificity">
    <text evidence="4 5">Testis-specific.</text>
</comment>
<comment type="similarity">
    <text evidence="6">Belongs to the phosducin family.</text>
</comment>
<comment type="sequence caution" evidence="6">
    <conflict type="frameshift">
        <sequence resource="EMBL-CDS" id="AAH34431"/>
    </conflict>
</comment>
<reference key="1">
    <citation type="journal article" date="2005" name="Nature">
        <title>Generation and annotation of the DNA sequences of human chromosomes 2 and 4.</title>
        <authorList>
            <person name="Hillier L.W."/>
            <person name="Graves T.A."/>
            <person name="Fulton R.S."/>
            <person name="Fulton L.A."/>
            <person name="Pepin K.H."/>
            <person name="Minx P."/>
            <person name="Wagner-McPherson C."/>
            <person name="Layman D."/>
            <person name="Wylie K."/>
            <person name="Sekhon M."/>
            <person name="Becker M.C."/>
            <person name="Fewell G.A."/>
            <person name="Delehaunty K.D."/>
            <person name="Miner T.L."/>
            <person name="Nash W.E."/>
            <person name="Kremitzki C."/>
            <person name="Oddy L."/>
            <person name="Du H."/>
            <person name="Sun H."/>
            <person name="Bradshaw-Cordum H."/>
            <person name="Ali J."/>
            <person name="Carter J."/>
            <person name="Cordes M."/>
            <person name="Harris A."/>
            <person name="Isak A."/>
            <person name="van Brunt A."/>
            <person name="Nguyen C."/>
            <person name="Du F."/>
            <person name="Courtney L."/>
            <person name="Kalicki J."/>
            <person name="Ozersky P."/>
            <person name="Abbott S."/>
            <person name="Armstrong J."/>
            <person name="Belter E.A."/>
            <person name="Caruso L."/>
            <person name="Cedroni M."/>
            <person name="Cotton M."/>
            <person name="Davidson T."/>
            <person name="Desai A."/>
            <person name="Elliott G."/>
            <person name="Erb T."/>
            <person name="Fronick C."/>
            <person name="Gaige T."/>
            <person name="Haakenson W."/>
            <person name="Haglund K."/>
            <person name="Holmes A."/>
            <person name="Harkins R."/>
            <person name="Kim K."/>
            <person name="Kruchowski S.S."/>
            <person name="Strong C.M."/>
            <person name="Grewal N."/>
            <person name="Goyea E."/>
            <person name="Hou S."/>
            <person name="Levy A."/>
            <person name="Martinka S."/>
            <person name="Mead K."/>
            <person name="McLellan M.D."/>
            <person name="Meyer R."/>
            <person name="Randall-Maher J."/>
            <person name="Tomlinson C."/>
            <person name="Dauphin-Kohlberg S."/>
            <person name="Kozlowicz-Reilly A."/>
            <person name="Shah N."/>
            <person name="Swearengen-Shahid S."/>
            <person name="Snider J."/>
            <person name="Strong J.T."/>
            <person name="Thompson J."/>
            <person name="Yoakum M."/>
            <person name="Leonard S."/>
            <person name="Pearman C."/>
            <person name="Trani L."/>
            <person name="Radionenko M."/>
            <person name="Waligorski J.E."/>
            <person name="Wang C."/>
            <person name="Rock S.M."/>
            <person name="Tin-Wollam A.-M."/>
            <person name="Maupin R."/>
            <person name="Latreille P."/>
            <person name="Wendl M.C."/>
            <person name="Yang S.-P."/>
            <person name="Pohl C."/>
            <person name="Wallis J.W."/>
            <person name="Spieth J."/>
            <person name="Bieri T.A."/>
            <person name="Berkowicz N."/>
            <person name="Nelson J.O."/>
            <person name="Osborne J."/>
            <person name="Ding L."/>
            <person name="Meyer R."/>
            <person name="Sabo A."/>
            <person name="Shotland Y."/>
            <person name="Sinha P."/>
            <person name="Wohldmann P.E."/>
            <person name="Cook L.L."/>
            <person name="Hickenbotham M.T."/>
            <person name="Eldred J."/>
            <person name="Williams D."/>
            <person name="Jones T.A."/>
            <person name="She X."/>
            <person name="Ciccarelli F.D."/>
            <person name="Izaurralde E."/>
            <person name="Taylor J."/>
            <person name="Schmutz J."/>
            <person name="Myers R.M."/>
            <person name="Cox D.R."/>
            <person name="Huang X."/>
            <person name="McPherson J.D."/>
            <person name="Mardis E.R."/>
            <person name="Clifton S.W."/>
            <person name="Warren W.C."/>
            <person name="Chinwalla A.T."/>
            <person name="Eddy S.R."/>
            <person name="Marra M.A."/>
            <person name="Ovcharenko I."/>
            <person name="Furey T.S."/>
            <person name="Miller W."/>
            <person name="Eichler E.E."/>
            <person name="Bork P."/>
            <person name="Suyama M."/>
            <person name="Torrents D."/>
            <person name="Waterston R.H."/>
            <person name="Wilson R.K."/>
        </authorList>
    </citation>
    <scope>NUCLEOTIDE SEQUENCE [LARGE SCALE GENOMIC DNA]</scope>
</reference>
<reference key="2">
    <citation type="submission" date="2005-07" db="EMBL/GenBank/DDBJ databases">
        <authorList>
            <person name="Mural R.J."/>
            <person name="Istrail S."/>
            <person name="Sutton G.G."/>
            <person name="Florea L."/>
            <person name="Halpern A.L."/>
            <person name="Mobarry C.M."/>
            <person name="Lippert R."/>
            <person name="Walenz B."/>
            <person name="Shatkay H."/>
            <person name="Dew I."/>
            <person name="Miller J.R."/>
            <person name="Flanigan M.J."/>
            <person name="Edwards N.J."/>
            <person name="Bolanos R."/>
            <person name="Fasulo D."/>
            <person name="Halldorsson B.V."/>
            <person name="Hannenhalli S."/>
            <person name="Turner R."/>
            <person name="Yooseph S."/>
            <person name="Lu F."/>
            <person name="Nusskern D.R."/>
            <person name="Shue B.C."/>
            <person name="Zheng X.H."/>
            <person name="Zhong F."/>
            <person name="Delcher A.L."/>
            <person name="Huson D.H."/>
            <person name="Kravitz S.A."/>
            <person name="Mouchard L."/>
            <person name="Reinert K."/>
            <person name="Remington K.A."/>
            <person name="Clark A.G."/>
            <person name="Waterman M.S."/>
            <person name="Eichler E.E."/>
            <person name="Adams M.D."/>
            <person name="Hunkapiller M.W."/>
            <person name="Myers E.W."/>
            <person name="Venter J.C."/>
        </authorList>
    </citation>
    <scope>NUCLEOTIDE SEQUENCE [LARGE SCALE GENOMIC DNA]</scope>
</reference>
<reference key="3">
    <citation type="journal article" date="2004" name="Genome Res.">
        <title>The status, quality, and expansion of the NIH full-length cDNA project: the Mammalian Gene Collection (MGC).</title>
        <authorList>
            <consortium name="The MGC Project Team"/>
        </authorList>
    </citation>
    <scope>NUCLEOTIDE SEQUENCE [LARGE SCALE MRNA]</scope>
    <source>
        <tissue>Brain</tissue>
    </source>
</reference>
<reference key="4">
    <citation type="journal article" date="2022" name="Cell. Death. Discov.">
        <title>PDCL2 is essential for spermiogenesis and male fertility in mice.</title>
        <authorList>
            <person name="Li M."/>
            <person name="Chen Y."/>
            <person name="Ou J."/>
            <person name="Huang J."/>
            <person name="Zhang X."/>
        </authorList>
    </citation>
    <scope>TISSUE SPECIFICITY</scope>
</reference>
<reference key="5">
    <citation type="journal article" date="2023" name="Andrology">
        <title>PDCL2 is essential for sperm acrosome formation and male fertility in mice.</title>
        <authorList>
            <person name="Fujihara Y."/>
            <person name="Kobayashi K."/>
            <person name="Abbasi F."/>
            <person name="Endo T."/>
            <person name="Yu Z."/>
            <person name="Ikawa M."/>
            <person name="Matzuk M.M."/>
        </authorList>
    </citation>
    <scope>TISSUE SPECIFICITY</scope>
</reference>
<reference key="6">
    <citation type="journal article" date="2009" name="Acta Crystallogr. F">
        <title>Structure of the thioredoxin-fold domain of human phosducin-like protein 2.</title>
        <authorList>
            <person name="Lou X."/>
            <person name="Bao R."/>
            <person name="Zhou C.Z."/>
            <person name="Chen Y."/>
        </authorList>
    </citation>
    <scope>X-RAY CRYSTALLOGRAPHY (2.7 ANGSTROMS) OF 88-205</scope>
</reference>
<sequence>MQDPNEDTEWNDILRDFGILPPKEESKDEIEEMVLRLQKEAMVKPFEKMTLAQLKEAEDEFDEEDMQAVETYRKKRLQEWKALKKKQKFGELREISGNQYVNEVTNAEEDVWVIIHLYRSSIPMCLLVNQHLSLLARKFPETKFVKAIVNSCIQHYHDNCLPTIFVYKNGQIEAKFIGIIECGGINLKLEELEWKLAEVGAIQTDLEENPRKDMVDMMVSSIRNTSIHDDSDSSNSDNDTK</sequence>
<accession>Q8N4E4</accession>
<accession>A8MWA2</accession>
<accession>B9ZVQ9</accession>
<keyword id="KW-0002">3D-structure</keyword>
<keyword id="KW-0221">Differentiation</keyword>
<keyword id="KW-0256">Endoplasmic reticulum</keyword>
<keyword id="KW-1267">Proteomics identification</keyword>
<keyword id="KW-1185">Reference proteome</keyword>
<keyword id="KW-0744">Spermatogenesis</keyword>
<feature type="chain" id="PRO_0000246157" description="Phosducin-like protein 2">
    <location>
        <begin position="1"/>
        <end position="241"/>
    </location>
</feature>
<feature type="domain" description="Phosducin" evidence="3">
    <location>
        <begin position="34"/>
        <end position="202"/>
    </location>
</feature>
<feature type="region of interest" description="Thioredoxin fold" evidence="1">
    <location>
        <begin position="89"/>
        <end position="241"/>
    </location>
</feature>
<feature type="sequence conflict" description="In Ref. 3; AAH34431." evidence="6" ref="3">
    <original>D</original>
    <variation>N</variation>
    <location>
        <position position="62"/>
    </location>
</feature>
<feature type="helix" evidence="7">
    <location>
        <begin position="97"/>
        <end position="99"/>
    </location>
</feature>
<feature type="helix" evidence="7">
    <location>
        <begin position="100"/>
        <end position="103"/>
    </location>
</feature>
<feature type="turn" evidence="7">
    <location>
        <begin position="104"/>
        <end position="106"/>
    </location>
</feature>
<feature type="strand" evidence="7">
    <location>
        <begin position="112"/>
        <end position="118"/>
    </location>
</feature>
<feature type="helix" evidence="7">
    <location>
        <begin position="123"/>
        <end position="138"/>
    </location>
</feature>
<feature type="strand" evidence="7">
    <location>
        <begin position="142"/>
        <end position="148"/>
    </location>
</feature>
<feature type="helix" evidence="7">
    <location>
        <begin position="149"/>
        <end position="151"/>
    </location>
</feature>
<feature type="helix" evidence="7">
    <location>
        <begin position="158"/>
        <end position="160"/>
    </location>
</feature>
<feature type="strand" evidence="7">
    <location>
        <begin position="162"/>
        <end position="168"/>
    </location>
</feature>
<feature type="strand" evidence="7">
    <location>
        <begin position="171"/>
        <end position="178"/>
    </location>
</feature>
<feature type="turn" evidence="7">
    <location>
        <begin position="179"/>
        <end position="183"/>
    </location>
</feature>
<feature type="helix" evidence="7">
    <location>
        <begin position="189"/>
        <end position="197"/>
    </location>
</feature>
<feature type="turn" evidence="7">
    <location>
        <begin position="198"/>
        <end position="200"/>
    </location>
</feature>
<dbReference type="EMBL" id="AC024243">
    <property type="status" value="NOT_ANNOTATED_CDS"/>
    <property type="molecule type" value="Genomic_DNA"/>
</dbReference>
<dbReference type="EMBL" id="CH471057">
    <property type="protein sequence ID" value="EAX05469.1"/>
    <property type="molecule type" value="Genomic_DNA"/>
</dbReference>
<dbReference type="EMBL" id="BC034431">
    <property type="protein sequence ID" value="AAH34431.1"/>
    <property type="status" value="ALT_FRAME"/>
    <property type="molecule type" value="mRNA"/>
</dbReference>
<dbReference type="CCDS" id="CCDS47059.1"/>
<dbReference type="RefSeq" id="NP_689614.2">
    <property type="nucleotide sequence ID" value="NM_152401.3"/>
</dbReference>
<dbReference type="PDB" id="3EVI">
    <property type="method" value="X-ray"/>
    <property type="resolution" value="2.70 A"/>
    <property type="chains" value="A/B=88-205"/>
</dbReference>
<dbReference type="PDBsum" id="3EVI"/>
<dbReference type="SMR" id="Q8N4E4"/>
<dbReference type="BioGRID" id="126343">
    <property type="interactions" value="8"/>
</dbReference>
<dbReference type="FunCoup" id="Q8N4E4">
    <property type="interactions" value="184"/>
</dbReference>
<dbReference type="IntAct" id="Q8N4E4">
    <property type="interactions" value="2"/>
</dbReference>
<dbReference type="STRING" id="9606.ENSP00000295645"/>
<dbReference type="iPTMnet" id="Q8N4E4"/>
<dbReference type="PhosphoSitePlus" id="Q8N4E4"/>
<dbReference type="BioMuta" id="PDCL2"/>
<dbReference type="DMDM" id="215273865"/>
<dbReference type="jPOST" id="Q8N4E4"/>
<dbReference type="MassIVE" id="Q8N4E4"/>
<dbReference type="PaxDb" id="9606-ENSP00000295645"/>
<dbReference type="PeptideAtlas" id="Q8N4E4"/>
<dbReference type="ProteomicsDB" id="71924"/>
<dbReference type="Antibodypedia" id="44095">
    <property type="antibodies" value="77 antibodies from 23 providers"/>
</dbReference>
<dbReference type="DNASU" id="132954"/>
<dbReference type="Ensembl" id="ENST00000295645.9">
    <property type="protein sequence ID" value="ENSP00000295645.4"/>
    <property type="gene ID" value="ENSG00000163440.12"/>
</dbReference>
<dbReference type="GeneID" id="132954"/>
<dbReference type="KEGG" id="hsa:132954"/>
<dbReference type="MANE-Select" id="ENST00000295645.9">
    <property type="protein sequence ID" value="ENSP00000295645.4"/>
    <property type="RefSeq nucleotide sequence ID" value="NM_152401.3"/>
    <property type="RefSeq protein sequence ID" value="NP_689614.2"/>
</dbReference>
<dbReference type="UCSC" id="uc003hbb.3">
    <property type="organism name" value="human"/>
</dbReference>
<dbReference type="AGR" id="HGNC:29524"/>
<dbReference type="CTD" id="132954"/>
<dbReference type="DisGeNET" id="132954"/>
<dbReference type="GeneCards" id="PDCL2"/>
<dbReference type="HGNC" id="HGNC:29524">
    <property type="gene designation" value="PDCL2"/>
</dbReference>
<dbReference type="HPA" id="ENSG00000163440">
    <property type="expression patterns" value="Tissue enriched (testis)"/>
</dbReference>
<dbReference type="MalaCards" id="PDCL2"/>
<dbReference type="MIM" id="611676">
    <property type="type" value="gene"/>
</dbReference>
<dbReference type="neXtProt" id="NX_Q8N4E4"/>
<dbReference type="OpenTargets" id="ENSG00000163440"/>
<dbReference type="PharmGKB" id="PA134987062"/>
<dbReference type="VEuPathDB" id="HostDB:ENSG00000163440"/>
<dbReference type="eggNOG" id="KOG3170">
    <property type="taxonomic scope" value="Eukaryota"/>
</dbReference>
<dbReference type="GeneTree" id="ENSGT00940000160654"/>
<dbReference type="HOGENOM" id="CLU_072604_0_0_1"/>
<dbReference type="InParanoid" id="Q8N4E4"/>
<dbReference type="OMA" id="DSCIQHY"/>
<dbReference type="OrthoDB" id="45518at2759"/>
<dbReference type="PAN-GO" id="Q8N4E4">
    <property type="GO annotations" value="2 GO annotations based on evolutionary models"/>
</dbReference>
<dbReference type="PhylomeDB" id="Q8N4E4"/>
<dbReference type="TreeFam" id="TF315179"/>
<dbReference type="PathwayCommons" id="Q8N4E4"/>
<dbReference type="SignaLink" id="Q8N4E4"/>
<dbReference type="BioGRID-ORCS" id="132954">
    <property type="hits" value="63 hits in 1134 CRISPR screens"/>
</dbReference>
<dbReference type="EvolutionaryTrace" id="Q8N4E4"/>
<dbReference type="GenomeRNAi" id="132954"/>
<dbReference type="Pharos" id="Q8N4E4">
    <property type="development level" value="Tbio"/>
</dbReference>
<dbReference type="PRO" id="PR:Q8N4E4"/>
<dbReference type="Proteomes" id="UP000005640">
    <property type="component" value="Chromosome 4"/>
</dbReference>
<dbReference type="RNAct" id="Q8N4E4">
    <property type="molecule type" value="protein"/>
</dbReference>
<dbReference type="Bgee" id="ENSG00000163440">
    <property type="expression patterns" value="Expressed in right testis and 46 other cell types or tissues"/>
</dbReference>
<dbReference type="GO" id="GO:0005737">
    <property type="term" value="C:cytoplasm"/>
    <property type="evidence" value="ECO:0000318"/>
    <property type="project" value="GO_Central"/>
</dbReference>
<dbReference type="GO" id="GO:0005783">
    <property type="term" value="C:endoplasmic reticulum"/>
    <property type="evidence" value="ECO:0000250"/>
    <property type="project" value="UniProtKB"/>
</dbReference>
<dbReference type="GO" id="GO:0001675">
    <property type="term" value="P:acrosome assembly"/>
    <property type="evidence" value="ECO:0000250"/>
    <property type="project" value="UniProtKB"/>
</dbReference>
<dbReference type="GO" id="GO:0006457">
    <property type="term" value="P:protein folding"/>
    <property type="evidence" value="ECO:0000318"/>
    <property type="project" value="GO_Central"/>
</dbReference>
<dbReference type="GO" id="GO:0007288">
    <property type="term" value="P:sperm axoneme assembly"/>
    <property type="evidence" value="ECO:0007669"/>
    <property type="project" value="Ensembl"/>
</dbReference>
<dbReference type="GO" id="GO:0007286">
    <property type="term" value="P:spermatid development"/>
    <property type="evidence" value="ECO:0000250"/>
    <property type="project" value="UniProtKB"/>
</dbReference>
<dbReference type="CDD" id="cd02988">
    <property type="entry name" value="Phd_like_VIAF"/>
    <property type="match status" value="1"/>
</dbReference>
<dbReference type="Gene3D" id="3.40.30.10">
    <property type="entry name" value="Glutaredoxin"/>
    <property type="match status" value="1"/>
</dbReference>
<dbReference type="InterPro" id="IPR051498">
    <property type="entry name" value="Phosducin-like_chap/apop_reg"/>
</dbReference>
<dbReference type="InterPro" id="IPR024253">
    <property type="entry name" value="Phosducin_thioredoxin-like_dom"/>
</dbReference>
<dbReference type="InterPro" id="IPR036249">
    <property type="entry name" value="Thioredoxin-like_sf"/>
</dbReference>
<dbReference type="PANTHER" id="PTHR45809:SF1">
    <property type="entry name" value="PHOSDUCIN-LIKE PROTEIN 2"/>
    <property type="match status" value="1"/>
</dbReference>
<dbReference type="PANTHER" id="PTHR45809">
    <property type="entry name" value="VIRAL IAP-ASSOCIATED FACTOR HOMOLOG"/>
    <property type="match status" value="1"/>
</dbReference>
<dbReference type="Pfam" id="PF02114">
    <property type="entry name" value="Phosducin"/>
    <property type="match status" value="1"/>
</dbReference>
<dbReference type="SUPFAM" id="SSF52833">
    <property type="entry name" value="Thioredoxin-like"/>
    <property type="match status" value="1"/>
</dbReference>
<organism>
    <name type="scientific">Homo sapiens</name>
    <name type="common">Human</name>
    <dbReference type="NCBI Taxonomy" id="9606"/>
    <lineage>
        <taxon>Eukaryota</taxon>
        <taxon>Metazoa</taxon>
        <taxon>Chordata</taxon>
        <taxon>Craniata</taxon>
        <taxon>Vertebrata</taxon>
        <taxon>Euteleostomi</taxon>
        <taxon>Mammalia</taxon>
        <taxon>Eutheria</taxon>
        <taxon>Euarchontoglires</taxon>
        <taxon>Primates</taxon>
        <taxon>Haplorrhini</taxon>
        <taxon>Catarrhini</taxon>
        <taxon>Hominidae</taxon>
        <taxon>Homo</taxon>
    </lineage>
</organism>